<proteinExistence type="evidence at protein level"/>
<feature type="chain" id="PRO_0000450713" description="Katanin p80 WD40 repeat-containing subunit B1 homolog KTN80.1">
    <location>
        <begin position="1"/>
        <end position="1019"/>
    </location>
</feature>
<feature type="repeat" description="WD 1" evidence="2">
    <location>
        <begin position="13"/>
        <end position="53"/>
    </location>
</feature>
<feature type="repeat" description="WD 2" evidence="2">
    <location>
        <begin position="56"/>
        <end position="95"/>
    </location>
</feature>
<feature type="repeat" description="WD 3" evidence="2">
    <location>
        <begin position="98"/>
        <end position="137"/>
    </location>
</feature>
<feature type="repeat" description="WD 4" evidence="2">
    <location>
        <begin position="140"/>
        <end position="181"/>
    </location>
</feature>
<feature type="repeat" description="WD 5" evidence="2">
    <location>
        <begin position="183"/>
        <end position="221"/>
    </location>
</feature>
<feature type="repeat" description="WD 6" evidence="2">
    <location>
        <begin position="224"/>
        <end position="264"/>
    </location>
</feature>
<feature type="repeat" description="WD 7" evidence="1">
    <location>
        <begin position="266"/>
        <end position="303"/>
    </location>
</feature>
<feature type="region of interest" description="Disordered" evidence="3">
    <location>
        <begin position="388"/>
        <end position="424"/>
    </location>
</feature>
<feature type="region of interest" description="Disordered" evidence="3">
    <location>
        <begin position="455"/>
        <end position="474"/>
    </location>
</feature>
<feature type="region of interest" description="Disordered" evidence="3">
    <location>
        <begin position="517"/>
        <end position="581"/>
    </location>
</feature>
<feature type="region of interest" description="Disordered" evidence="3">
    <location>
        <begin position="607"/>
        <end position="652"/>
    </location>
</feature>
<feature type="short sequence motif" description="DWD box" evidence="7">
    <location>
        <begin position="114"/>
        <end position="130"/>
    </location>
</feature>
<feature type="compositionally biased region" description="Polar residues" evidence="3">
    <location>
        <begin position="465"/>
        <end position="474"/>
    </location>
</feature>
<feature type="compositionally biased region" description="Basic and acidic residues" evidence="3">
    <location>
        <begin position="553"/>
        <end position="572"/>
    </location>
</feature>
<feature type="compositionally biased region" description="Polar residues" evidence="3">
    <location>
        <begin position="614"/>
        <end position="628"/>
    </location>
</feature>
<gene>
    <name evidence="5" type="primary">KTN80.1</name>
    <name evidence="8" type="ordered locus">At1g11160</name>
    <name evidence="9" type="ORF">T28P6.17</name>
</gene>
<sequence length="1019" mass="112385">MAKRGYKLQEFVAHSGNVNCLSIGKKTSRLLLTGGDDYKVNLWSIGKTTSPMSLCGHTSPVDSVAFNSEEVLVLAGASSGVIKLWDLEESKMVRAFTGHRSNCSAVEFHPFGEFLASGSSDTNLRVWDTRKKGCIQTYKGHTRGISTIEFSPDGRWVVSGGLDNVVKVWDLTAGKLLHEFKCHEGPIRSLDFHPLEFLLATGSADRTVKFWDLETFELIGTTRPEATGVRAIAFHPDGQTLFCGLDDGLKVYSWEPVICRDGVDMGWSTLGDFCINEGKFIGCSYYRNSVGIWVSDISELEPYGAVSEDKNECMVKRFSVLNDQSERMGSGPRGSVSPDYETREIKNIYVDCGNLNVAQNPGSLKATLPLESGKVATMVSEKQNAAYFGPAGDKYSSTSRDSDSGEESSYSERESIPFSRTKSGMLLRPAHVRKTLAKFEESKQSAVVQSATRKKSGLAVEEEPQTQNAFLSEQNASKPFDAEDSIIKGITNKFEKALSSEPPTDEANRMFLKPPRIHRSSNSKYNDTRRAMSADPATFGKGGMENSGDVEDIPSKTERVLSREKPGDEQKNTEYPSGSRELNPVKIVEGVNVVSGRTRSLVEKFERGEKTTHTEGASTTIEQNNNAVQEDPRKTSRQTGETPVISTRRARSTPARVMPIVLNRDSNVTSDEPPLTQPARTSSFPVMPVILNQASNVTYDEPSVALTQESRTSHARILPVTFNQATNITSEEASVTLRRQRRNSAARVRPVLLSQATSHECPVTSVRPLRTSPARVMPTKLNQSVNMTSDTSHIASMHRVSPTQMLATPTVIDQVADMTLDETHATQIQPACDNMPQKEEPNISDREDDSDITENLMLTHNEFLSTLQSRLTKLQIVRHFWERSDVKGAIGALRKLTDQSVQADVISILTEKIEILTLDMFSQLVPVLTSLLGSRTERPVNVSLDMLLKLVAVFGTVIRSTVSAPRIVGVDLHANERLEICQICSAGLHKIQRILPVLARRGGLITRKAQELNLVLQEP</sequence>
<reference key="1">
    <citation type="journal article" date="2000" name="Nature">
        <title>Sequence and analysis of chromosome 1 of the plant Arabidopsis thaliana.</title>
        <authorList>
            <person name="Theologis A."/>
            <person name="Ecker J.R."/>
            <person name="Palm C.J."/>
            <person name="Federspiel N.A."/>
            <person name="Kaul S."/>
            <person name="White O."/>
            <person name="Alonso J."/>
            <person name="Altafi H."/>
            <person name="Araujo R."/>
            <person name="Bowman C.L."/>
            <person name="Brooks S.Y."/>
            <person name="Buehler E."/>
            <person name="Chan A."/>
            <person name="Chao Q."/>
            <person name="Chen H."/>
            <person name="Cheuk R.F."/>
            <person name="Chin C.W."/>
            <person name="Chung M.K."/>
            <person name="Conn L."/>
            <person name="Conway A.B."/>
            <person name="Conway A.R."/>
            <person name="Creasy T.H."/>
            <person name="Dewar K."/>
            <person name="Dunn P."/>
            <person name="Etgu P."/>
            <person name="Feldblyum T.V."/>
            <person name="Feng J.-D."/>
            <person name="Fong B."/>
            <person name="Fujii C.Y."/>
            <person name="Gill J.E."/>
            <person name="Goldsmith A.D."/>
            <person name="Haas B."/>
            <person name="Hansen N.F."/>
            <person name="Hughes B."/>
            <person name="Huizar L."/>
            <person name="Hunter J.L."/>
            <person name="Jenkins J."/>
            <person name="Johnson-Hopson C."/>
            <person name="Khan S."/>
            <person name="Khaykin E."/>
            <person name="Kim C.J."/>
            <person name="Koo H.L."/>
            <person name="Kremenetskaia I."/>
            <person name="Kurtz D.B."/>
            <person name="Kwan A."/>
            <person name="Lam B."/>
            <person name="Langin-Hooper S."/>
            <person name="Lee A."/>
            <person name="Lee J.M."/>
            <person name="Lenz C.A."/>
            <person name="Li J.H."/>
            <person name="Li Y.-P."/>
            <person name="Lin X."/>
            <person name="Liu S.X."/>
            <person name="Liu Z.A."/>
            <person name="Luros J.S."/>
            <person name="Maiti R."/>
            <person name="Marziali A."/>
            <person name="Militscher J."/>
            <person name="Miranda M."/>
            <person name="Nguyen M."/>
            <person name="Nierman W.C."/>
            <person name="Osborne B.I."/>
            <person name="Pai G."/>
            <person name="Peterson J."/>
            <person name="Pham P.K."/>
            <person name="Rizzo M."/>
            <person name="Rooney T."/>
            <person name="Rowley D."/>
            <person name="Sakano H."/>
            <person name="Salzberg S.L."/>
            <person name="Schwartz J.R."/>
            <person name="Shinn P."/>
            <person name="Southwick A.M."/>
            <person name="Sun H."/>
            <person name="Tallon L.J."/>
            <person name="Tambunga G."/>
            <person name="Toriumi M.J."/>
            <person name="Town C.D."/>
            <person name="Utterback T."/>
            <person name="Van Aken S."/>
            <person name="Vaysberg M."/>
            <person name="Vysotskaia V.S."/>
            <person name="Walker M."/>
            <person name="Wu D."/>
            <person name="Yu G."/>
            <person name="Fraser C.M."/>
            <person name="Venter J.C."/>
            <person name="Davis R.W."/>
        </authorList>
    </citation>
    <scope>NUCLEOTIDE SEQUENCE [LARGE SCALE GENOMIC DNA]</scope>
    <source>
        <strain>cv. Columbia</strain>
    </source>
</reference>
<reference key="2">
    <citation type="journal article" date="2017" name="Plant J.">
        <title>Araport11: a complete reannotation of the Arabidopsis thaliana reference genome.</title>
        <authorList>
            <person name="Cheng C.Y."/>
            <person name="Krishnakumar V."/>
            <person name="Chan A.P."/>
            <person name="Thibaud-Nissen F."/>
            <person name="Schobel S."/>
            <person name="Town C.D."/>
        </authorList>
    </citation>
    <scope>GENOME REANNOTATION</scope>
    <source>
        <strain>cv. Columbia</strain>
    </source>
</reference>
<reference key="3">
    <citation type="journal article" date="2008" name="Plant Cell">
        <title>Characterization of Arabidopsis and rice DWD proteins and their roles as substrate receptors for CUL4-RING E3 ubiquitin ligases.</title>
        <authorList>
            <person name="Lee J.H."/>
            <person name="Terzaghi W."/>
            <person name="Gusmaroli G."/>
            <person name="Charron J.B."/>
            <person name="Yoon H.J."/>
            <person name="Chen H."/>
            <person name="He Y.J."/>
            <person name="Xiong Y."/>
            <person name="Deng X.W."/>
        </authorList>
    </citation>
    <scope>DWD MOTIF</scope>
</reference>
<reference key="4">
    <citation type="journal article" date="2008" name="Plant Cell">
        <title>Arabidopsis DDB1-CUL4 ASSOCIATED FACTOR1 forms a nuclear E3 ubiquitin ligase with DDB1 and CUL4 that is involved in multiple plant developmental processes.</title>
        <authorList>
            <person name="Zhang Y."/>
            <person name="Feng S."/>
            <person name="Chen F."/>
            <person name="Chen H."/>
            <person name="Wang J."/>
            <person name="McCall C."/>
            <person name="Xiong Y."/>
            <person name="Deng X.W."/>
        </authorList>
    </citation>
    <scope>GENE FAMILY</scope>
</reference>
<reference key="5">
    <citation type="journal article" date="2017" name="EMBO J.">
        <title>KTN80 confers precision to microtubule severing by specific targeting of katanin complexes in plant cells.</title>
        <authorList>
            <person name="Wang C."/>
            <person name="Liu W."/>
            <person name="Wang G."/>
            <person name="Li J."/>
            <person name="Dong L."/>
            <person name="Han L."/>
            <person name="Wang Q."/>
            <person name="Tian J."/>
            <person name="Yu Y."/>
            <person name="Gao C."/>
            <person name="Kong Z."/>
        </authorList>
    </citation>
    <scope>FUNCTION</scope>
    <scope>DISRUPTION PHENOTYPE</scope>
    <scope>SUBCELLULAR LOCATION</scope>
    <scope>TISSUE SPECIFICITY</scope>
    <scope>SUBUNIT</scope>
    <scope>INTERACTION WITH AAA1/KTN1; KTN80.3 AND KTN80.4</scope>
    <scope>GENE FAMILY</scope>
    <scope>NOMENCLATURE</scope>
    <source>
        <strain>cv. Columbia</strain>
    </source>
</reference>
<organism>
    <name type="scientific">Arabidopsis thaliana</name>
    <name type="common">Mouse-ear cress</name>
    <dbReference type="NCBI Taxonomy" id="3702"/>
    <lineage>
        <taxon>Eukaryota</taxon>
        <taxon>Viridiplantae</taxon>
        <taxon>Streptophyta</taxon>
        <taxon>Embryophyta</taxon>
        <taxon>Tracheophyta</taxon>
        <taxon>Spermatophyta</taxon>
        <taxon>Magnoliopsida</taxon>
        <taxon>eudicotyledons</taxon>
        <taxon>Gunneridae</taxon>
        <taxon>Pentapetalae</taxon>
        <taxon>rosids</taxon>
        <taxon>malvids</taxon>
        <taxon>Brassicales</taxon>
        <taxon>Brassicaceae</taxon>
        <taxon>Camelineae</taxon>
        <taxon>Arabidopsis</taxon>
    </lineage>
</organism>
<protein>
    <recommendedName>
        <fullName evidence="2 5">Katanin p80 WD40 repeat-containing subunit B1 homolog KTN80.1</fullName>
    </recommendedName>
</protein>
<comment type="function">
    <text evidence="2 4">May participate in a complex which severs microtubules in an ATP-dependent manner (By similarity). Microtubule severing may promote rapid reorganization of cellular microtubule arrays (By similarity). Confers precision to microtubule (MT) severing by specific targeting of KTN1 to MT cleavage sites such as crossover or branching nucleation sites (PubMed:28978669). Together with other KTN80s, regulates cell elongation by modulating MT organization (PubMed:28978669).</text>
</comment>
<comment type="subunit">
    <text evidence="4">Component of KTN80-KTN1 complexes composed of a hexamer of KTN1-KTN80 heterodimers that sense microtubule (MT) geometry to confer precise MT severing (PubMed:28978669). Interacts directly with AAA1/KTN1 and KTN80.3, and weakly with KTN80.4 (PubMed:28978669).</text>
</comment>
<comment type="subcellular location">
    <subcellularLocation>
        <location evidence="2 4">Cytoplasm</location>
        <location evidence="2 4">Cytoskeleton</location>
    </subcellularLocation>
    <text evidence="4">Present in dynamic discrete particles specifically localized to microtubule (MT) crossovers and branching nucleation sites.</text>
</comment>
<comment type="tissue specificity">
    <text evidence="4">Expressed at low levels in siliques, flowers, leaves, stems and roots.</text>
</comment>
<comment type="disruption phenotype">
    <text evidence="4">The double mutant ktn80.1 ktn80.2 exhibits normal growth, but the quadruple mutant ktn80.1 ktn80.2 ktn80.3 ktn80.4 has a severe dwarf phenotype, with small and round dark-green rosette leaves as well as wide and short petioles, probably due to cell elongation defects, and associated with a complex cortical microtubule (MT) network with stable entanglements (PubMed:28978669). Plants missing KTN80s have a disruption of KTN1 recruitment at MT crossover or branching nucleation sites, leading to an abolishment of MT severing (PubMed:28978669).</text>
</comment>
<comment type="similarity">
    <text evidence="2">Belongs to the WD repeat KATNB1 family.</text>
</comment>
<comment type="sequence caution" evidence="6">
    <conflict type="erroneous gene model prediction">
        <sequence resource="EMBL-CDS" id="AAD49999"/>
    </conflict>
</comment>
<name>KTN81_ARATH</name>
<keyword id="KW-0963">Cytoplasm</keyword>
<keyword id="KW-0206">Cytoskeleton</keyword>
<keyword id="KW-0493">Microtubule</keyword>
<keyword id="KW-1185">Reference proteome</keyword>
<keyword id="KW-0677">Repeat</keyword>
<keyword id="KW-0853">WD repeat</keyword>
<evidence type="ECO:0000255" key="1"/>
<evidence type="ECO:0000255" key="2">
    <source>
        <dbReference type="HAMAP-Rule" id="MF_03022"/>
    </source>
</evidence>
<evidence type="ECO:0000256" key="3">
    <source>
        <dbReference type="SAM" id="MobiDB-lite"/>
    </source>
</evidence>
<evidence type="ECO:0000269" key="4">
    <source>
    </source>
</evidence>
<evidence type="ECO:0000303" key="5">
    <source>
    </source>
</evidence>
<evidence type="ECO:0000305" key="6"/>
<evidence type="ECO:0000305" key="7">
    <source>
    </source>
</evidence>
<evidence type="ECO:0000312" key="8">
    <source>
        <dbReference type="Araport" id="AT1G11160"/>
    </source>
</evidence>
<evidence type="ECO:0000312" key="9">
    <source>
        <dbReference type="EMBL" id="AAD49999.1"/>
    </source>
</evidence>
<dbReference type="EMBL" id="AC007259">
    <property type="protein sequence ID" value="AAD49999.1"/>
    <property type="status" value="ALT_SEQ"/>
    <property type="molecule type" value="Genomic_DNA"/>
</dbReference>
<dbReference type="EMBL" id="CP002684">
    <property type="protein sequence ID" value="ANM60883.1"/>
    <property type="molecule type" value="Genomic_DNA"/>
</dbReference>
<dbReference type="PIR" id="E86245">
    <property type="entry name" value="E86245"/>
</dbReference>
<dbReference type="RefSeq" id="NP_001323134.1">
    <property type="nucleotide sequence ID" value="NM_001331961.1"/>
</dbReference>
<dbReference type="SMR" id="A0A1P8AW69"/>
<dbReference type="FunCoup" id="A0A1P8AW69">
    <property type="interactions" value="298"/>
</dbReference>
<dbReference type="iPTMnet" id="A0A1P8AW69"/>
<dbReference type="ProteomicsDB" id="206259"/>
<dbReference type="EnsemblPlants" id="AT1G11160.2">
    <property type="protein sequence ID" value="AT1G11160.2"/>
    <property type="gene ID" value="AT1G11160"/>
</dbReference>
<dbReference type="GeneID" id="837657"/>
<dbReference type="Gramene" id="AT1G11160.2">
    <property type="protein sequence ID" value="AT1G11160.2"/>
    <property type="gene ID" value="AT1G11160"/>
</dbReference>
<dbReference type="KEGG" id="ath:AT1G11160"/>
<dbReference type="Araport" id="AT1G11160"/>
<dbReference type="TAIR" id="AT1G11160">
    <property type="gene designation" value="KTN80.1"/>
</dbReference>
<dbReference type="InParanoid" id="A0A1P8AW69"/>
<dbReference type="PRO" id="PR:A0A1P8AW69"/>
<dbReference type="Proteomes" id="UP000006548">
    <property type="component" value="Chromosome 1"/>
</dbReference>
<dbReference type="ExpressionAtlas" id="A0A1P8AW69">
    <property type="expression patterns" value="baseline and differential"/>
</dbReference>
<dbReference type="GO" id="GO:0005737">
    <property type="term" value="C:cytoplasm"/>
    <property type="evidence" value="ECO:0007669"/>
    <property type="project" value="UniProtKB-UniRule"/>
</dbReference>
<dbReference type="GO" id="GO:0008352">
    <property type="term" value="C:katanin complex"/>
    <property type="evidence" value="ECO:0007669"/>
    <property type="project" value="InterPro"/>
</dbReference>
<dbReference type="GO" id="GO:0005874">
    <property type="term" value="C:microtubule"/>
    <property type="evidence" value="ECO:0007669"/>
    <property type="project" value="UniProtKB-KW"/>
</dbReference>
<dbReference type="GO" id="GO:0015630">
    <property type="term" value="C:microtubule cytoskeleton"/>
    <property type="evidence" value="ECO:0000314"/>
    <property type="project" value="UniProtKB"/>
</dbReference>
<dbReference type="GO" id="GO:0008017">
    <property type="term" value="F:microtubule binding"/>
    <property type="evidence" value="ECO:0007669"/>
    <property type="project" value="UniProtKB-UniRule"/>
</dbReference>
<dbReference type="GO" id="GO:0051013">
    <property type="term" value="P:microtubule severing"/>
    <property type="evidence" value="ECO:0000315"/>
    <property type="project" value="UniProtKB"/>
</dbReference>
<dbReference type="GO" id="GO:0051510">
    <property type="term" value="P:regulation of unidimensional cell growth"/>
    <property type="evidence" value="ECO:0000315"/>
    <property type="project" value="UniProtKB"/>
</dbReference>
<dbReference type="CDD" id="cd00200">
    <property type="entry name" value="WD40"/>
    <property type="match status" value="1"/>
</dbReference>
<dbReference type="FunFam" id="2.130.10.10:FF:000183">
    <property type="entry name" value="Katanin p80 WD40 repeat-containing subunit B1"/>
    <property type="match status" value="1"/>
</dbReference>
<dbReference type="FunFam" id="2.130.10.10:FF:000897">
    <property type="entry name" value="Katanin p80 WD40 repeat-containing subunit B1 homolog"/>
    <property type="match status" value="1"/>
</dbReference>
<dbReference type="Gene3D" id="2.130.10.10">
    <property type="entry name" value="YVTN repeat-like/Quinoprotein amine dehydrogenase"/>
    <property type="match status" value="2"/>
</dbReference>
<dbReference type="HAMAP" id="MF_03022">
    <property type="entry name" value="Katanin_p80_B1"/>
    <property type="match status" value="1"/>
</dbReference>
<dbReference type="InterPro" id="IPR020472">
    <property type="entry name" value="G-protein_beta_WD-40_rep"/>
</dbReference>
<dbReference type="InterPro" id="IPR028021">
    <property type="entry name" value="Katanin_C-terminal"/>
</dbReference>
<dbReference type="InterPro" id="IPR026962">
    <property type="entry name" value="KTNB1"/>
</dbReference>
<dbReference type="InterPro" id="IPR015943">
    <property type="entry name" value="WD40/YVTN_repeat-like_dom_sf"/>
</dbReference>
<dbReference type="InterPro" id="IPR019775">
    <property type="entry name" value="WD40_repeat_CS"/>
</dbReference>
<dbReference type="InterPro" id="IPR036322">
    <property type="entry name" value="WD40_repeat_dom_sf"/>
</dbReference>
<dbReference type="InterPro" id="IPR001680">
    <property type="entry name" value="WD40_rpt"/>
</dbReference>
<dbReference type="PANTHER" id="PTHR19845">
    <property type="entry name" value="KATANIN P80 SUBUNIT"/>
    <property type="match status" value="1"/>
</dbReference>
<dbReference type="PANTHER" id="PTHR19845:SF19">
    <property type="entry name" value="KATANIN P80 WD40 REPEAT-CONTAINING SUBUNIT B1 HOMOLOG KTN80.1"/>
    <property type="match status" value="1"/>
</dbReference>
<dbReference type="Pfam" id="PF13925">
    <property type="entry name" value="Katanin_con80"/>
    <property type="match status" value="1"/>
</dbReference>
<dbReference type="Pfam" id="PF00400">
    <property type="entry name" value="WD40"/>
    <property type="match status" value="6"/>
</dbReference>
<dbReference type="PRINTS" id="PR00320">
    <property type="entry name" value="GPROTEINBRPT"/>
</dbReference>
<dbReference type="SMART" id="SM00320">
    <property type="entry name" value="WD40"/>
    <property type="match status" value="6"/>
</dbReference>
<dbReference type="SUPFAM" id="SSF50978">
    <property type="entry name" value="WD40 repeat-like"/>
    <property type="match status" value="1"/>
</dbReference>
<dbReference type="PROSITE" id="PS00678">
    <property type="entry name" value="WD_REPEATS_1"/>
    <property type="match status" value="3"/>
</dbReference>
<dbReference type="PROSITE" id="PS50082">
    <property type="entry name" value="WD_REPEATS_2"/>
    <property type="match status" value="5"/>
</dbReference>
<dbReference type="PROSITE" id="PS50294">
    <property type="entry name" value="WD_REPEATS_REGION"/>
    <property type="match status" value="1"/>
</dbReference>
<accession>A0A1P8AW69</accession>
<accession>Q9SXA3</accession>